<organismHost>
    <name type="scientific">Gallus gallus</name>
    <name type="common">Chicken</name>
    <dbReference type="NCBI Taxonomy" id="9031"/>
</organismHost>
<proteinExistence type="inferred from homology"/>
<sequence>MAGITMGSEHMYDDTTFPTNDPESSWKIVLAGEKFMTASAALKTIVGCVKNPLITFSDDGLMIQGTVCGQRMFVPIDCTSFSEYEWRGPTAIFLALTDSRRTLLDAFKCDKKKVVEVCFTFRGEPPCRHLTQTVTYANDGCSFSSTIVKYELWSASIICPQKTPDATFSLNKQQLSKILTVAAKVQHEELIFALKAEGGFYAGTICDVISFDIDGSAMVQYPYNATSHASSALIVACGKKKTNKSIAVTAYGSGKPFCLALEDTNAFRNVVQKIKTGAAGADLGFYTTCDPPMLCVRPHVFGSPTAFLFCNSDCMSIYELEEVSAVSGAIKSKRISEYFPKVSNIGSRKRGPSSPPFEREGKLAKVINQ</sequence>
<gene>
    <name type="primary">MDV055</name>
</gene>
<dbReference type="EMBL" id="AF243438">
    <property type="protein sequence ID" value="AAG14235.1"/>
    <property type="molecule type" value="Genomic_DNA"/>
</dbReference>
<dbReference type="RefSeq" id="YP_001033971.1">
    <property type="nucleotide sequence ID" value="NC_002229.3"/>
</dbReference>
<dbReference type="SMR" id="Q77MR9"/>
<dbReference type="GeneID" id="4811516"/>
<dbReference type="KEGG" id="vg:4811516"/>
<dbReference type="Proteomes" id="UP000008072">
    <property type="component" value="Segment"/>
</dbReference>
<dbReference type="GO" id="GO:0042025">
    <property type="term" value="C:host cell nucleus"/>
    <property type="evidence" value="ECO:0007669"/>
    <property type="project" value="UniProtKB-SubCell"/>
</dbReference>
<dbReference type="GO" id="GO:0003677">
    <property type="term" value="F:DNA binding"/>
    <property type="evidence" value="ECO:0007669"/>
    <property type="project" value="UniProtKB-KW"/>
</dbReference>
<dbReference type="GO" id="GO:0006260">
    <property type="term" value="P:DNA replication"/>
    <property type="evidence" value="ECO:0007669"/>
    <property type="project" value="UniProtKB-KW"/>
</dbReference>
<dbReference type="Gene3D" id="3.70.10.10">
    <property type="match status" value="1"/>
</dbReference>
<dbReference type="InterPro" id="IPR046938">
    <property type="entry name" value="DNA_clamp_sf"/>
</dbReference>
<dbReference type="InterPro" id="IPR003202">
    <property type="entry name" value="Herpes_UL42"/>
</dbReference>
<dbReference type="Pfam" id="PF02282">
    <property type="entry name" value="Herpes_UL42"/>
    <property type="match status" value="1"/>
</dbReference>
<dbReference type="SUPFAM" id="SSF55979">
    <property type="entry name" value="DNA clamp"/>
    <property type="match status" value="2"/>
</dbReference>
<protein>
    <recommendedName>
        <fullName>DNA polymerase processivity factor</fullName>
    </recommendedName>
    <alternativeName>
        <fullName>DNA-binding protein UL42</fullName>
    </alternativeName>
    <alternativeName>
        <fullName>Polymerase accessory protein</fullName>
        <shortName>PAP</shortName>
    </alternativeName>
</protein>
<organism>
    <name type="scientific">Gallid herpesvirus 2 (strain Chicken/Md5/ATCC VR-987)</name>
    <name type="common">GaHV-2</name>
    <name type="synonym">Marek's disease herpesvirus type 1</name>
    <dbReference type="NCBI Taxonomy" id="10389"/>
    <lineage>
        <taxon>Viruses</taxon>
        <taxon>Duplodnaviria</taxon>
        <taxon>Heunggongvirae</taxon>
        <taxon>Peploviricota</taxon>
        <taxon>Herviviricetes</taxon>
        <taxon>Herpesvirales</taxon>
        <taxon>Orthoherpesviridae</taxon>
        <taxon>Alphaherpesvirinae</taxon>
        <taxon>Mardivirus</taxon>
        <taxon>Mardivirus gallidalpha2</taxon>
        <taxon>Gallid alphaherpesvirus 2</taxon>
    </lineage>
</organism>
<accession>Q77MR9</accession>
<feature type="chain" id="PRO_0000406522" description="DNA polymerase processivity factor">
    <location>
        <begin position="1"/>
        <end position="369"/>
    </location>
</feature>
<feature type="region of interest" description="Disordered" evidence="2">
    <location>
        <begin position="345"/>
        <end position="369"/>
    </location>
</feature>
<comment type="function">
    <text evidence="1">Plays an essential role in viral DNA replication by acting as the polymerase accessory subunit. Associates with the viral polymerase to increase its processivity and forms high-affinity direct interactions with DNA. Facilitates the origin-binding protein UL9 loading onto DNA thus increasing its ability to assemble into a functional complex capable of unwinding duplex DNA (By similarity).</text>
</comment>
<comment type="subunit">
    <text evidence="1">Interacts with the DNA polymerase catalytic subunit. Interacts with the origin-binding protein (By similarity).</text>
</comment>
<comment type="subcellular location">
    <subcellularLocation>
        <location evidence="1">Host nucleus</location>
    </subcellularLocation>
</comment>
<comment type="similarity">
    <text evidence="3">Belongs to the herpesviridae DNA polymerase processivity factor family.</text>
</comment>
<name>PAP_GAHVM</name>
<keyword id="KW-0235">DNA replication</keyword>
<keyword id="KW-0238">DNA-binding</keyword>
<keyword id="KW-1048">Host nucleus</keyword>
<keyword id="KW-1185">Reference proteome</keyword>
<evidence type="ECO:0000250" key="1"/>
<evidence type="ECO:0000256" key="2">
    <source>
        <dbReference type="SAM" id="MobiDB-lite"/>
    </source>
</evidence>
<evidence type="ECO:0000305" key="3"/>
<reference key="1">
    <citation type="journal article" date="2000" name="J. Virol.">
        <title>The genome of a very virulent Marek's disease virus.</title>
        <authorList>
            <person name="Tulman E.R."/>
            <person name="Afonso C.L."/>
            <person name="Lu Z."/>
            <person name="Zsak L."/>
            <person name="Rock D.L."/>
            <person name="Kutish G.F."/>
        </authorList>
    </citation>
    <scope>NUCLEOTIDE SEQUENCE [LARGE SCALE GENOMIC DNA]</scope>
</reference>